<comment type="function">
    <text evidence="1">May bind long-chain fatty acids, such as palmitate, and may play a role in lipid transport or fatty acid metabolism.</text>
</comment>
<dbReference type="EMBL" id="AE009949">
    <property type="protein sequence ID" value="AAL98241.1"/>
    <property type="molecule type" value="Genomic_DNA"/>
</dbReference>
<dbReference type="RefSeq" id="WP_011018090.1">
    <property type="nucleotide sequence ID" value="NC_003485.1"/>
</dbReference>
<dbReference type="SMR" id="Q8NZW1"/>
<dbReference type="KEGG" id="spm:spyM18_1709"/>
<dbReference type="HOGENOM" id="CLU_048251_2_0_9"/>
<dbReference type="GO" id="GO:0008289">
    <property type="term" value="F:lipid binding"/>
    <property type="evidence" value="ECO:0007669"/>
    <property type="project" value="UniProtKB-KW"/>
</dbReference>
<dbReference type="Gene3D" id="3.30.1180.10">
    <property type="match status" value="1"/>
</dbReference>
<dbReference type="Gene3D" id="2.20.28.50">
    <property type="entry name" value="degv family protein"/>
    <property type="match status" value="1"/>
</dbReference>
<dbReference type="Gene3D" id="3.40.50.10440">
    <property type="entry name" value="Dihydroxyacetone kinase, domain 1"/>
    <property type="match status" value="1"/>
</dbReference>
<dbReference type="InterPro" id="IPR003797">
    <property type="entry name" value="DegV"/>
</dbReference>
<dbReference type="InterPro" id="IPR043168">
    <property type="entry name" value="DegV_C"/>
</dbReference>
<dbReference type="InterPro" id="IPR050270">
    <property type="entry name" value="DegV_domain_contain"/>
</dbReference>
<dbReference type="NCBIfam" id="TIGR00762">
    <property type="entry name" value="DegV"/>
    <property type="match status" value="1"/>
</dbReference>
<dbReference type="PANTHER" id="PTHR33434">
    <property type="entry name" value="DEGV DOMAIN-CONTAINING PROTEIN DR_1986-RELATED"/>
    <property type="match status" value="1"/>
</dbReference>
<dbReference type="PANTHER" id="PTHR33434:SF2">
    <property type="entry name" value="FATTY ACID-BINDING PROTEIN TM_1468"/>
    <property type="match status" value="1"/>
</dbReference>
<dbReference type="Pfam" id="PF02645">
    <property type="entry name" value="DegV"/>
    <property type="match status" value="1"/>
</dbReference>
<dbReference type="SUPFAM" id="SSF82549">
    <property type="entry name" value="DAK1/DegV-like"/>
    <property type="match status" value="1"/>
</dbReference>
<dbReference type="PROSITE" id="PS51482">
    <property type="entry name" value="DEGV"/>
    <property type="match status" value="1"/>
</dbReference>
<evidence type="ECO:0000250" key="1"/>
<evidence type="ECO:0000250" key="2">
    <source>
        <dbReference type="UniProtKB" id="Q9X1H9"/>
    </source>
</evidence>
<evidence type="ECO:0000255" key="3">
    <source>
        <dbReference type="PROSITE-ProRule" id="PRU00815"/>
    </source>
</evidence>
<sequence>MTWKIVTDSGCDLRSLTRQSKELRFERVPLTLQIGTEIFRDDDGLDIDNMMTTMYQSSKATTSSCPSPEAFLQAYRGSDNVIVMTITGTLSGSHNSARLAKNELLEENPNVNIHLIDSLSAGGEMDLLVLELERLINLGLSFEEVVKQITAYQQKTRLIFVLAKVDNLVKNGRLSKLVGKVIGLLNIRMVGKASNKGTLELLQKARGQKKAVSALIEEIQKEGYVGGKVYIAHAQNPKICEQISEKIKSLYPDAVIQTGRTSGLCSFYAEDGGLLMGYEI</sequence>
<keyword id="KW-0446">Lipid-binding</keyword>
<gene>
    <name type="ordered locus">spyM18_1709</name>
</gene>
<organism>
    <name type="scientific">Streptococcus pyogenes serotype M18 (strain MGAS8232)</name>
    <dbReference type="NCBI Taxonomy" id="186103"/>
    <lineage>
        <taxon>Bacteria</taxon>
        <taxon>Bacillati</taxon>
        <taxon>Bacillota</taxon>
        <taxon>Bacilli</taxon>
        <taxon>Lactobacillales</taxon>
        <taxon>Streptococcaceae</taxon>
        <taxon>Streptococcus</taxon>
    </lineage>
</organism>
<accession>Q8NZW1</accession>
<reference key="1">
    <citation type="journal article" date="2002" name="Proc. Natl. Acad. Sci. U.S.A.">
        <title>Genome sequence and comparative microarray analysis of serotype M18 group A Streptococcus strains associated with acute rheumatic fever outbreaks.</title>
        <authorList>
            <person name="Smoot J.C."/>
            <person name="Barbian K.D."/>
            <person name="Van Gompel J.J."/>
            <person name="Smoot L.M."/>
            <person name="Chaussee M.S."/>
            <person name="Sylva G.L."/>
            <person name="Sturdevant D.E."/>
            <person name="Ricklefs S.M."/>
            <person name="Porcella S.F."/>
            <person name="Parkins L.D."/>
            <person name="Beres S.B."/>
            <person name="Campbell D.S."/>
            <person name="Smith T.M."/>
            <person name="Zhang Q."/>
            <person name="Kapur V."/>
            <person name="Daly J.A."/>
            <person name="Veasy L.G."/>
            <person name="Musser J.M."/>
        </authorList>
    </citation>
    <scope>NUCLEOTIDE SEQUENCE [LARGE SCALE GENOMIC DNA]</scope>
    <source>
        <strain>MGAS8232</strain>
    </source>
</reference>
<name>Y1709_STRP8</name>
<feature type="chain" id="PRO_0000209811" description="DegV domain-containing protein spyM18_1709">
    <location>
        <begin position="1"/>
        <end position="280"/>
    </location>
</feature>
<feature type="domain" description="DegV" evidence="3">
    <location>
        <begin position="3"/>
        <end position="280"/>
    </location>
</feature>
<feature type="binding site" evidence="2">
    <location>
        <position position="63"/>
    </location>
    <ligand>
        <name>hexadecanoate</name>
        <dbReference type="ChEBI" id="CHEBI:7896"/>
    </ligand>
</feature>
<feature type="binding site" evidence="2">
    <location>
        <position position="91"/>
    </location>
    <ligand>
        <name>hexadecanoate</name>
        <dbReference type="ChEBI" id="CHEBI:7896"/>
    </ligand>
</feature>
<protein>
    <recommendedName>
        <fullName>DegV domain-containing protein spyM18_1709</fullName>
    </recommendedName>
</protein>
<proteinExistence type="inferred from homology"/>